<proteinExistence type="evidence at transcript level"/>
<name>DYM_RAT</name>
<gene>
    <name type="primary">Dym</name>
</gene>
<feature type="initiator methionine" description="Removed" evidence="2">
    <location>
        <position position="1"/>
    </location>
</feature>
<feature type="chain" id="PRO_0000365012" description="Dymeclin">
    <location>
        <begin position="2"/>
        <end position="674"/>
    </location>
</feature>
<feature type="lipid moiety-binding region" description="N-myristoyl glycine" evidence="2">
    <location>
        <position position="2"/>
    </location>
</feature>
<comment type="function">
    <text evidence="1">Necessary for correct organization of Golgi apparatus. Involved in bone development.</text>
</comment>
<comment type="subunit">
    <text evidence="1">Interacts with GOLM1 and PPIB.</text>
</comment>
<comment type="subcellular location">
    <subcellularLocation>
        <location>Cytoplasm</location>
    </subcellularLocation>
    <subcellularLocation>
        <location evidence="1">Golgi apparatus</location>
    </subcellularLocation>
    <subcellularLocation>
        <location evidence="2">Membrane</location>
        <topology evidence="2">Lipid-anchor</topology>
    </subcellularLocation>
    <text evidence="1">Sequence analysis programs predict 1 transmembrane region. However, it has been shown in human that it is not a stably anchored transmembrane protein but it weakly associates with the Golgi apparatus and shuttles between the Golgi and the cytosol (By similarity).</text>
</comment>
<comment type="PTM">
    <text evidence="1">Myristoylated in vitro; myristoylation is not essential for protein targeting to Golgi compartment.</text>
</comment>
<comment type="similarity">
    <text evidence="3">Belongs to the dymeclin family.</text>
</comment>
<evidence type="ECO:0000250" key="1"/>
<evidence type="ECO:0000250" key="2">
    <source>
        <dbReference type="UniProtKB" id="Q7RTS9"/>
    </source>
</evidence>
<evidence type="ECO:0000305" key="3"/>
<keyword id="KW-0963">Cytoplasm</keyword>
<keyword id="KW-0333">Golgi apparatus</keyword>
<keyword id="KW-0449">Lipoprotein</keyword>
<keyword id="KW-0472">Membrane</keyword>
<keyword id="KW-0519">Myristate</keyword>
<keyword id="KW-1185">Reference proteome</keyword>
<reference key="1">
    <citation type="journal article" date="2004" name="Genome Res.">
        <title>The status, quality, and expansion of the NIH full-length cDNA project: the Mammalian Gene Collection (MGC).</title>
        <authorList>
            <consortium name="The MGC Project Team"/>
        </authorList>
    </citation>
    <scope>NUCLEOTIDE SEQUENCE [LARGE SCALE MRNA]</scope>
    <source>
        <tissue>Placenta</tissue>
    </source>
</reference>
<sequence length="674" mass="76491">MGSNSSKISDLPKNEYLKRLSGPEAISENDPFWNQLFSFSFSAPTSSTELKLLEEATISVCKSLVENNPRTGNLAALTKVFLARTRELRLSAECQNHIFIWQTHNALFIICCLLKVFICEMSEEELQLHFTYEEKLPGTYTLCVLLGSDSEDLLEELLCSLIQLITDTPLLDITYEISVEAISAMIVFLSCQLFHKEVLRQSISHKYLMQGPCLPYTSKLVKTLLYNFIRQEKPPPPGTHVFPQQSDGGGLLYGLASGVATGLWTVFTLGGVGSKAASPELTSPLANQSLLLLLVLVNLTDAPDIPNPYRQAVTSFKNTQDSSPFPSSVPHTFQINFNSLYTTLCEQQTSDQATLLLYTLLHQNANVRTYMLARTDMENLVLPILEILYHVEERNSHHVYMALIILLILTEDDGFNRSIHEVILKNITWYSERVLTEISLGSLLILVVIRTIQYNMTRTRDKYLHTNCLAALANMSAQFRSLHQYAAQRIISLFSLLSKKHNKVLEQATQSLRGSLSSSDVPLPDYAQDLSVIEEVIRMMLEIINSCLTNSLHHNPNLVYALLYKRDLFEQFRTHPSFQDIMQNIDLVISFFSSRLLQSGAELSVERVLEIIKQGVVALPKDRLKKFPELKFKYVEEEQPEEFFIPYVWSLVYNSAVGLYWNPQDIQLFAMDSD</sequence>
<dbReference type="EMBL" id="BC168151">
    <property type="protein sequence ID" value="AAI68151.1"/>
    <property type="molecule type" value="mRNA"/>
</dbReference>
<dbReference type="RefSeq" id="XP_017456369.1">
    <property type="nucleotide sequence ID" value="XM_017600880.3"/>
</dbReference>
<dbReference type="FunCoup" id="B4F766">
    <property type="interactions" value="3013"/>
</dbReference>
<dbReference type="STRING" id="10116.ENSRNOP00000060744"/>
<dbReference type="PhosphoSitePlus" id="B4F766"/>
<dbReference type="PaxDb" id="10116-ENSRNOP00000024950"/>
<dbReference type="PeptideAtlas" id="B4F766"/>
<dbReference type="Ensembl" id="ENSRNOT00000024950.8">
    <property type="protein sequence ID" value="ENSRNOP00000024950.7"/>
    <property type="gene ID" value="ENSRNOG00000018425.9"/>
</dbReference>
<dbReference type="GeneID" id="291433"/>
<dbReference type="AGR" id="RGD:1309111"/>
<dbReference type="CTD" id="54808"/>
<dbReference type="RGD" id="1309111">
    <property type="gene designation" value="Dym"/>
</dbReference>
<dbReference type="eggNOG" id="KOG2225">
    <property type="taxonomic scope" value="Eukaryota"/>
</dbReference>
<dbReference type="GeneTree" id="ENSGT00390000008772"/>
<dbReference type="HOGENOM" id="CLU_013309_2_0_1"/>
<dbReference type="InParanoid" id="B4F766"/>
<dbReference type="OMA" id="PYVCQRF"/>
<dbReference type="PhylomeDB" id="B4F766"/>
<dbReference type="TreeFam" id="TF314870"/>
<dbReference type="PRO" id="PR:B4F766"/>
<dbReference type="Proteomes" id="UP000002494">
    <property type="component" value="Chromosome 18"/>
</dbReference>
<dbReference type="GO" id="GO:0005737">
    <property type="term" value="C:cytoplasm"/>
    <property type="evidence" value="ECO:0000250"/>
    <property type="project" value="UniProtKB"/>
</dbReference>
<dbReference type="GO" id="GO:0005794">
    <property type="term" value="C:Golgi apparatus"/>
    <property type="evidence" value="ECO:0000250"/>
    <property type="project" value="UniProtKB"/>
</dbReference>
<dbReference type="GO" id="GO:0016020">
    <property type="term" value="C:membrane"/>
    <property type="evidence" value="ECO:0007669"/>
    <property type="project" value="UniProtKB-SubCell"/>
</dbReference>
<dbReference type="GO" id="GO:0019899">
    <property type="term" value="F:enzyme binding"/>
    <property type="evidence" value="ECO:0000266"/>
    <property type="project" value="RGD"/>
</dbReference>
<dbReference type="GO" id="GO:0060348">
    <property type="term" value="P:bone development"/>
    <property type="evidence" value="ECO:0000250"/>
    <property type="project" value="UniProtKB"/>
</dbReference>
<dbReference type="GO" id="GO:0007030">
    <property type="term" value="P:Golgi organization"/>
    <property type="evidence" value="ECO:0000250"/>
    <property type="project" value="UniProtKB"/>
</dbReference>
<dbReference type="InterPro" id="IPR019142">
    <property type="entry name" value="Dymeclin"/>
</dbReference>
<dbReference type="PANTHER" id="PTHR12895">
    <property type="entry name" value="DYMECLIN"/>
    <property type="match status" value="1"/>
</dbReference>
<dbReference type="PANTHER" id="PTHR12895:SF9">
    <property type="entry name" value="DYMECLIN"/>
    <property type="match status" value="1"/>
</dbReference>
<dbReference type="Pfam" id="PF09742">
    <property type="entry name" value="Dymeclin"/>
    <property type="match status" value="1"/>
</dbReference>
<protein>
    <recommendedName>
        <fullName>Dymeclin</fullName>
    </recommendedName>
</protein>
<organism>
    <name type="scientific">Rattus norvegicus</name>
    <name type="common">Rat</name>
    <dbReference type="NCBI Taxonomy" id="10116"/>
    <lineage>
        <taxon>Eukaryota</taxon>
        <taxon>Metazoa</taxon>
        <taxon>Chordata</taxon>
        <taxon>Craniata</taxon>
        <taxon>Vertebrata</taxon>
        <taxon>Euteleostomi</taxon>
        <taxon>Mammalia</taxon>
        <taxon>Eutheria</taxon>
        <taxon>Euarchontoglires</taxon>
        <taxon>Glires</taxon>
        <taxon>Rodentia</taxon>
        <taxon>Myomorpha</taxon>
        <taxon>Muroidea</taxon>
        <taxon>Muridae</taxon>
        <taxon>Murinae</taxon>
        <taxon>Rattus</taxon>
    </lineage>
</organism>
<accession>B4F766</accession>